<protein>
    <recommendedName>
        <fullName evidence="1">Probable transcriptional regulatory protein LJ_0904</fullName>
    </recommendedName>
</protein>
<keyword id="KW-0963">Cytoplasm</keyword>
<keyword id="KW-0238">DNA-binding</keyword>
<keyword id="KW-0804">Transcription</keyword>
<keyword id="KW-0805">Transcription regulation</keyword>
<evidence type="ECO:0000255" key="1">
    <source>
        <dbReference type="HAMAP-Rule" id="MF_00693"/>
    </source>
</evidence>
<evidence type="ECO:0000256" key="2">
    <source>
        <dbReference type="SAM" id="MobiDB-lite"/>
    </source>
</evidence>
<organism>
    <name type="scientific">Lactobacillus johnsonii (strain CNCM I-12250 / La1 / NCC 533)</name>
    <dbReference type="NCBI Taxonomy" id="257314"/>
    <lineage>
        <taxon>Bacteria</taxon>
        <taxon>Bacillati</taxon>
        <taxon>Bacillota</taxon>
        <taxon>Bacilli</taxon>
        <taxon>Lactobacillales</taxon>
        <taxon>Lactobacillaceae</taxon>
        <taxon>Lactobacillus</taxon>
    </lineage>
</organism>
<gene>
    <name type="ordered locus">LJ_0904</name>
</gene>
<reference key="1">
    <citation type="journal article" date="2004" name="Proc. Natl. Acad. Sci. U.S.A.">
        <title>The genome sequence of the probiotic intestinal bacterium Lactobacillus johnsonii NCC 533.</title>
        <authorList>
            <person name="Pridmore R.D."/>
            <person name="Berger B."/>
            <person name="Desiere F."/>
            <person name="Vilanova D."/>
            <person name="Barretto C."/>
            <person name="Pittet A.-C."/>
            <person name="Zwahlen M.-C."/>
            <person name="Rouvet M."/>
            <person name="Altermann E."/>
            <person name="Barrangou R."/>
            <person name="Mollet B."/>
            <person name="Mercenier A."/>
            <person name="Klaenhammer T."/>
            <person name="Arigoni F."/>
            <person name="Schell M.A."/>
        </authorList>
    </citation>
    <scope>NUCLEOTIDE SEQUENCE [LARGE SCALE GENOMIC DNA]</scope>
    <source>
        <strain>CNCM I-1225 / La1 / NCC 533</strain>
    </source>
</reference>
<accession>P62037</accession>
<feature type="chain" id="PRO_0000175825" description="Probable transcriptional regulatory protein LJ_0904">
    <location>
        <begin position="1"/>
        <end position="243"/>
    </location>
</feature>
<feature type="region of interest" description="Disordered" evidence="2">
    <location>
        <begin position="1"/>
        <end position="22"/>
    </location>
</feature>
<name>Y904_LACJO</name>
<sequence length="243" mass="26532">MSGHSKWHNIQGRKNAQDAKRGKVFQKLSREIYMAAKSGGPDPSGNPTLRMVMDKARAANMPKTNIERAIKKAEGNSDEHYDEITYEGYAPGGVAVLVEALTDNKNRTASDVRVAFTRNGGSLGATGSVAYMFDRKGYLVIDRSTTDADEDQVLLDVMDAGGDDLETSDDAFEIYTDPKQFTAVRDALEKAGYKLANAELTMIPQNTTPVPADKKEQFAHLIDALEDNDDVSNVYTAAADDDE</sequence>
<dbReference type="EMBL" id="AE017198">
    <property type="protein sequence ID" value="AAS08725.1"/>
    <property type="molecule type" value="Genomic_DNA"/>
</dbReference>
<dbReference type="RefSeq" id="WP_004894030.1">
    <property type="nucleotide sequence ID" value="NC_005362.1"/>
</dbReference>
<dbReference type="SMR" id="P62037"/>
<dbReference type="KEGG" id="ljo:LJ_0904"/>
<dbReference type="eggNOG" id="COG0217">
    <property type="taxonomic scope" value="Bacteria"/>
</dbReference>
<dbReference type="HOGENOM" id="CLU_062974_3_0_9"/>
<dbReference type="Proteomes" id="UP000000581">
    <property type="component" value="Chromosome"/>
</dbReference>
<dbReference type="GO" id="GO:0005829">
    <property type="term" value="C:cytosol"/>
    <property type="evidence" value="ECO:0007669"/>
    <property type="project" value="TreeGrafter"/>
</dbReference>
<dbReference type="GO" id="GO:0003677">
    <property type="term" value="F:DNA binding"/>
    <property type="evidence" value="ECO:0007669"/>
    <property type="project" value="UniProtKB-UniRule"/>
</dbReference>
<dbReference type="GO" id="GO:0006355">
    <property type="term" value="P:regulation of DNA-templated transcription"/>
    <property type="evidence" value="ECO:0007669"/>
    <property type="project" value="UniProtKB-UniRule"/>
</dbReference>
<dbReference type="FunFam" id="1.10.10.200:FF:000002">
    <property type="entry name" value="Probable transcriptional regulatory protein CLM62_37755"/>
    <property type="match status" value="1"/>
</dbReference>
<dbReference type="FunFam" id="3.30.70.980:FF:000002">
    <property type="entry name" value="Probable transcriptional regulatory protein YebC"/>
    <property type="match status" value="1"/>
</dbReference>
<dbReference type="Gene3D" id="1.10.10.200">
    <property type="match status" value="1"/>
</dbReference>
<dbReference type="Gene3D" id="3.30.70.980">
    <property type="match status" value="2"/>
</dbReference>
<dbReference type="HAMAP" id="MF_00693">
    <property type="entry name" value="Transcrip_reg_TACO1"/>
    <property type="match status" value="1"/>
</dbReference>
<dbReference type="InterPro" id="IPR017856">
    <property type="entry name" value="Integrase-like_N"/>
</dbReference>
<dbReference type="InterPro" id="IPR048300">
    <property type="entry name" value="TACO1_YebC-like_2nd/3rd_dom"/>
</dbReference>
<dbReference type="InterPro" id="IPR049083">
    <property type="entry name" value="TACO1_YebC_N"/>
</dbReference>
<dbReference type="InterPro" id="IPR002876">
    <property type="entry name" value="Transcrip_reg_TACO1-like"/>
</dbReference>
<dbReference type="InterPro" id="IPR026564">
    <property type="entry name" value="Transcrip_reg_TACO1-like_dom3"/>
</dbReference>
<dbReference type="InterPro" id="IPR029072">
    <property type="entry name" value="YebC-like"/>
</dbReference>
<dbReference type="NCBIfam" id="NF001030">
    <property type="entry name" value="PRK00110.1"/>
    <property type="match status" value="1"/>
</dbReference>
<dbReference type="NCBIfam" id="NF009044">
    <property type="entry name" value="PRK12378.1"/>
    <property type="match status" value="1"/>
</dbReference>
<dbReference type="NCBIfam" id="TIGR01033">
    <property type="entry name" value="YebC/PmpR family DNA-binding transcriptional regulator"/>
    <property type="match status" value="1"/>
</dbReference>
<dbReference type="PANTHER" id="PTHR12532:SF6">
    <property type="entry name" value="TRANSCRIPTIONAL REGULATORY PROTEIN YEBC-RELATED"/>
    <property type="match status" value="1"/>
</dbReference>
<dbReference type="PANTHER" id="PTHR12532">
    <property type="entry name" value="TRANSLATIONAL ACTIVATOR OF CYTOCHROME C OXIDASE 1"/>
    <property type="match status" value="1"/>
</dbReference>
<dbReference type="Pfam" id="PF20772">
    <property type="entry name" value="TACO1_YebC_N"/>
    <property type="match status" value="1"/>
</dbReference>
<dbReference type="Pfam" id="PF01709">
    <property type="entry name" value="Transcrip_reg"/>
    <property type="match status" value="1"/>
</dbReference>
<dbReference type="SUPFAM" id="SSF75625">
    <property type="entry name" value="YebC-like"/>
    <property type="match status" value="1"/>
</dbReference>
<proteinExistence type="inferred from homology"/>
<comment type="subcellular location">
    <subcellularLocation>
        <location evidence="1">Cytoplasm</location>
    </subcellularLocation>
</comment>
<comment type="similarity">
    <text evidence="1">Belongs to the TACO1 family.</text>
</comment>